<sequence length="155" mass="16230">MQFTLAAAAALFGASALAAPASPGSTGAPPDPNMYENIDIADFNVRKGEDGTIKYVNFKLSGDDADGLLCEAQNPGLPSNVITCGESKYRFALSSGKQYEFALSLYHELGLAVGFYGTGEIFTHCRAGGLGDFICQQQNPTTIVIDSLPDAPAEA</sequence>
<proteinExistence type="evidence at protein level"/>
<name>PEVD1_VERDV</name>
<keyword id="KW-1015">Disulfide bond</keyword>
<keyword id="KW-1185">Reference proteome</keyword>
<keyword id="KW-0964">Secreted</keyword>
<keyword id="KW-0732">Signal</keyword>
<protein>
    <recommendedName>
        <fullName evidence="9">Effector protein PevD1</fullName>
    </recommendedName>
    <alternativeName>
        <fullName evidence="8">Hypersensitive response-inducing protein PevD1</fullName>
    </alternativeName>
</protein>
<accession>G2WWV6</accession>
<reference key="1">
    <citation type="journal article" date="2011" name="PLoS Pathog.">
        <title>Comparative genomics yields insights into niche adaptation of plant vascular wilt pathogens.</title>
        <authorList>
            <person name="Klosterman S.J."/>
            <person name="Subbarao K.V."/>
            <person name="Kang S."/>
            <person name="Veronese P."/>
            <person name="Gold S.E."/>
            <person name="Thomma B.P.H.J."/>
            <person name="Chen Z."/>
            <person name="Henrissat B."/>
            <person name="Lee Y.-H."/>
            <person name="Park J."/>
            <person name="Garcia-Pedrajas M.D."/>
            <person name="Barbara D.J."/>
            <person name="Anchieta A."/>
            <person name="de Jonge R."/>
            <person name="Santhanam P."/>
            <person name="Maruthachalam K."/>
            <person name="Atallah Z."/>
            <person name="Amyotte S.G."/>
            <person name="Paz Z."/>
            <person name="Inderbitzin P."/>
            <person name="Hayes R.J."/>
            <person name="Heiman D.I."/>
            <person name="Young S."/>
            <person name="Zeng Q."/>
            <person name="Engels R."/>
            <person name="Galagan J."/>
            <person name="Cuomo C.A."/>
            <person name="Dobinson K.F."/>
            <person name="Ma L.-J."/>
        </authorList>
    </citation>
    <scope>NUCLEOTIDE SEQUENCE [LARGE SCALE GENOMIC DNA]</scope>
    <source>
        <strain>VdLs.17 / ATCC MYA-4575 / FGSC 10137</strain>
    </source>
</reference>
<reference key="2">
    <citation type="journal article" date="2012" name="Appl. Microbiol. Biotechnol.">
        <title>The purification and characterization of a novel hypersensitive-like response-inducing elicitor from Verticillium dahliae that induces resistance responses in tobacco.</title>
        <authorList>
            <person name="Wang B."/>
            <person name="Yang X."/>
            <person name="Zeng H."/>
            <person name="Liu H."/>
            <person name="Zhou T."/>
            <person name="Tan B."/>
            <person name="Yuan J."/>
            <person name="Guo L."/>
            <person name="Qiu D."/>
        </authorList>
    </citation>
    <scope>FUNCTION</scope>
    <scope>SUBCELLULAR LOCATION</scope>
</reference>
<reference key="3">
    <citation type="journal article" date="2014" name="Microbiol. Res.">
        <title>Mutational analysis of the Verticillium dahliae protein elicitor PevD1 identifies distinctive regions responsible for hypersensitive response and systemic acquired resistance in tobacco.</title>
        <authorList>
            <person name="Liu W."/>
            <person name="Zeng H."/>
            <person name="Liu Z."/>
            <person name="Yang X."/>
            <person name="Guo L."/>
            <person name="Qiu D."/>
        </authorList>
    </citation>
    <scope>FUNCTION</scope>
    <scope>DOMAIN</scope>
</reference>
<reference key="4">
    <citation type="journal article" date="2014" name="Plant Cell Rep.">
        <title>A fungal protein elicitor PevD1 induces Verticillium wilt resistance in cotton.</title>
        <authorList>
            <person name="Bu B."/>
            <person name="Qiu D."/>
            <person name="Zeng H."/>
            <person name="Guo L."/>
            <person name="Yuan J."/>
            <person name="Yang X."/>
        </authorList>
    </citation>
    <scope>FUNCTION</scope>
</reference>
<reference key="5">
    <citation type="journal article" date="2012" name="Acta Crystallogr. F">
        <title>Purification, crystallization and preliminary X-ray diffraction analysis of the effector protein PevD1 from Verticillium dahliae.</title>
        <authorList>
            <person name="Han L."/>
            <person name="Liu Z."/>
            <person name="Liu X."/>
            <person name="Qiu D."/>
        </authorList>
    </citation>
    <scope>SUBUNIT</scope>
</reference>
<reference key="6">
    <citation type="journal article" date="2017" name="J. Exp. Bot.">
        <title>The asparagine-rich protein NRP interacts with the Verticillium effector PevD1 and regulates the subcellular localization of cryptochrome 2.</title>
        <authorList>
            <person name="Zhou R."/>
            <person name="Zhu T."/>
            <person name="Han L."/>
            <person name="Liu M."/>
            <person name="Xu M."/>
            <person name="Liu Y."/>
            <person name="Han D."/>
            <person name="Qiu D."/>
            <person name="Gong Q."/>
            <person name="Liu X."/>
        </authorList>
    </citation>
    <scope>DISULFIDE BONDS</scope>
</reference>
<dbReference type="EMBL" id="DS572698">
    <property type="protein sequence ID" value="EGY21211.1"/>
    <property type="molecule type" value="Genomic_DNA"/>
</dbReference>
<dbReference type="RefSeq" id="XP_009651683.1">
    <property type="nucleotide sequence ID" value="XM_009653388.1"/>
</dbReference>
<dbReference type="SMR" id="G2WWV6"/>
<dbReference type="STRING" id="498257.G2WWV6"/>
<dbReference type="EnsemblFungi" id="EGY21211">
    <property type="protein sequence ID" value="EGY21211"/>
    <property type="gene ID" value="VDAG_02735"/>
</dbReference>
<dbReference type="GeneID" id="20704198"/>
<dbReference type="KEGG" id="vda:VDAG_02735"/>
<dbReference type="eggNOG" id="ENOG502SP40">
    <property type="taxonomic scope" value="Eukaryota"/>
</dbReference>
<dbReference type="HOGENOM" id="CLU_144932_1_0_1"/>
<dbReference type="InParanoid" id="G2WWV6"/>
<dbReference type="OMA" id="GPADEIC"/>
<dbReference type="OrthoDB" id="23786at1028384"/>
<dbReference type="PHI-base" id="PHI:8520"/>
<dbReference type="Proteomes" id="UP000001611">
    <property type="component" value="Chromosome 3"/>
</dbReference>
<dbReference type="GO" id="GO:0005576">
    <property type="term" value="C:extracellular region"/>
    <property type="evidence" value="ECO:0007669"/>
    <property type="project" value="UniProtKB-SubCell"/>
</dbReference>
<dbReference type="CDD" id="cd12798">
    <property type="entry name" value="Alt_A1"/>
    <property type="match status" value="1"/>
</dbReference>
<dbReference type="Gene3D" id="2.40.350.20">
    <property type="match status" value="1"/>
</dbReference>
<dbReference type="InterPro" id="IPR032382">
    <property type="entry name" value="AltA1"/>
</dbReference>
<dbReference type="Pfam" id="PF16541">
    <property type="entry name" value="AltA1"/>
    <property type="match status" value="1"/>
</dbReference>
<dbReference type="PROSITE" id="PS51895">
    <property type="entry name" value="AA1"/>
    <property type="match status" value="1"/>
</dbReference>
<comment type="function">
    <text evidence="3 5 6">Effector protein (PubMed:21691787, PubMed:24080193, PubMed:24337817). Elicits a hypersensitive response (HR) in tobacco plants (N.tabacum) and cotton (G.hirsutum) (PubMed:21691787, PubMed:24080193, PubMed:24337817). Boosts systemic acquired resistance (SAR) to tobacco mosaic virus (TMV) infection in N.tabacum and to V.dhaliae infection in primed cotton seedlings (PubMed:21691787, PubMed:24080193, PubMed:24337817).</text>
</comment>
<comment type="subunit">
    <text evidence="4 7">Monomer (PubMed:22750869). Interacts with Arabidopsis thaliana NRP (PubMed:28633330).</text>
</comment>
<comment type="subcellular location">
    <subcellularLocation>
        <location evidence="3">Secreted</location>
    </subcellularLocation>
</comment>
<comment type="domain">
    <text evidence="5">The N-terminal region (1-98) is sufficient for induction of SAR of N.tabacum to TMV infection. The C-terminal region (99-155) is sufficient for eliciting HR in N.tabacum.</text>
</comment>
<gene>
    <name evidence="8" type="primary">PevD1</name>
    <name evidence="10" type="ORF">VDAG_02735</name>
</gene>
<evidence type="ECO:0000255" key="1"/>
<evidence type="ECO:0000255" key="2">
    <source>
        <dbReference type="PROSITE-ProRule" id="PRU01243"/>
    </source>
</evidence>
<evidence type="ECO:0000269" key="3">
    <source>
    </source>
</evidence>
<evidence type="ECO:0000269" key="4">
    <source>
    </source>
</evidence>
<evidence type="ECO:0000269" key="5">
    <source>
    </source>
</evidence>
<evidence type="ECO:0000269" key="6">
    <source>
    </source>
</evidence>
<evidence type="ECO:0000269" key="7">
    <source>
    </source>
</evidence>
<evidence type="ECO:0000303" key="8">
    <source>
    </source>
</evidence>
<evidence type="ECO:0000305" key="9"/>
<evidence type="ECO:0000312" key="10">
    <source>
        <dbReference type="EMBL" id="EGY21211.1"/>
    </source>
</evidence>
<feature type="signal peptide" evidence="1">
    <location>
        <begin position="1"/>
        <end position="18"/>
    </location>
</feature>
<feature type="chain" id="PRO_0000451206" description="Effector protein PevD1">
    <location>
        <begin position="19"/>
        <end position="155"/>
    </location>
</feature>
<feature type="domain" description="AA1-like" evidence="2">
    <location>
        <begin position="33"/>
        <end position="148"/>
    </location>
</feature>
<feature type="disulfide bond" evidence="2 7">
    <location>
        <begin position="70"/>
        <end position="84"/>
    </location>
</feature>
<feature type="disulfide bond" evidence="2 7">
    <location>
        <begin position="125"/>
        <end position="135"/>
    </location>
</feature>
<organism>
    <name type="scientific">Verticillium dahliae (strain VdLs.17 / ATCC MYA-4575 / FGSC 10137)</name>
    <name type="common">Verticillium wilt</name>
    <dbReference type="NCBI Taxonomy" id="498257"/>
    <lineage>
        <taxon>Eukaryota</taxon>
        <taxon>Fungi</taxon>
        <taxon>Dikarya</taxon>
        <taxon>Ascomycota</taxon>
        <taxon>Pezizomycotina</taxon>
        <taxon>Sordariomycetes</taxon>
        <taxon>Hypocreomycetidae</taxon>
        <taxon>Glomerellales</taxon>
        <taxon>Plectosphaerellaceae</taxon>
        <taxon>Verticillium</taxon>
    </lineage>
</organism>